<feature type="chain" id="PRO_0000169897" description="Galactose-1-phosphate uridylyltransferase">
    <location>
        <begin position="1"/>
        <end position="354"/>
    </location>
</feature>
<feature type="region of interest" description="Disordered" evidence="3">
    <location>
        <begin position="36"/>
        <end position="72"/>
    </location>
</feature>
<feature type="active site" description="Tele-UMP-histidine intermediate" evidence="2">
    <location>
        <position position="167"/>
    </location>
</feature>
<feature type="binding site" evidence="1">
    <location>
        <position position="70"/>
    </location>
    <ligand>
        <name>Zn(2+)</name>
        <dbReference type="ChEBI" id="CHEBI:29105"/>
    </ligand>
</feature>
<feature type="binding site" evidence="1">
    <location>
        <position position="73"/>
    </location>
    <ligand>
        <name>Zn(2+)</name>
        <dbReference type="ChEBI" id="CHEBI:29105"/>
    </ligand>
</feature>
<feature type="binding site" evidence="2">
    <location>
        <position position="114"/>
    </location>
    <ligand>
        <name>Zn(2+)</name>
        <dbReference type="ChEBI" id="CHEBI:29105"/>
    </ligand>
</feature>
<feature type="binding site" evidence="1">
    <location>
        <position position="154"/>
    </location>
    <ligand>
        <name>UDP-alpha-D-glucose</name>
        <dbReference type="ChEBI" id="CHEBI:58885"/>
    </ligand>
</feature>
<feature type="binding site" evidence="2">
    <location>
        <position position="165"/>
    </location>
    <ligand>
        <name>Zn(2+)</name>
        <dbReference type="ChEBI" id="CHEBI:29105"/>
    </ligand>
</feature>
<feature type="binding site" evidence="1">
    <location>
        <position position="169"/>
    </location>
    <ligand>
        <name>UDP-alpha-D-glucose</name>
        <dbReference type="ChEBI" id="CHEBI:58885"/>
    </ligand>
</feature>
<feature type="binding site" evidence="1">
    <location>
        <position position="332"/>
    </location>
    <ligand>
        <name>UDP-alpha-D-glucose</name>
        <dbReference type="ChEBI" id="CHEBI:58885"/>
    </ligand>
</feature>
<feature type="sequence conflict" description="In Ref. 1; AAA26746." evidence="4" ref="1">
    <original>QGRTYHPPADQCPLCPS</original>
    <variation>AGAHLPSAGRPVPAVPV</variation>
    <location>
        <begin position="59"/>
        <end position="75"/>
    </location>
</feature>
<feature type="sequence conflict" description="In Ref. 1; AAA26746." evidence="4" ref="1">
    <original>NFSLPPYVRQAEVPRGLRIRHERVHQRDVPPERAAERLREVADVHERE</original>
    <variation>ELFTSAVRPAS</variation>
    <location>
        <begin position="307"/>
        <end position="354"/>
    </location>
</feature>
<reference key="1">
    <citation type="journal article" date="1988" name="J. Bacteriol.">
        <title>Gene organization and structure of the Streptomyces lividans gal operon.</title>
        <authorList>
            <person name="Adams C.W."/>
            <person name="Fornwald J.A."/>
            <person name="Schmidt F.J."/>
            <person name="Rosenberg M."/>
            <person name="Brawner M.E."/>
        </authorList>
    </citation>
    <scope>NUCLEOTIDE SEQUENCE [GENOMIC DNA]</scope>
</reference>
<reference key="2">
    <citation type="unpublished observations" date="1995-03">
        <authorList>
            <person name="Gibson T.J."/>
        </authorList>
    </citation>
    <scope>IDENTIFICATION OF PROBABLE FRAMESHIFTS</scope>
</reference>
<proteinExistence type="inferred from homology"/>
<keyword id="KW-0119">Carbohydrate metabolism</keyword>
<keyword id="KW-0299">Galactose metabolism</keyword>
<keyword id="KW-0408">Iron</keyword>
<keyword id="KW-0479">Metal-binding</keyword>
<keyword id="KW-0548">Nucleotidyltransferase</keyword>
<keyword id="KW-0808">Transferase</keyword>
<keyword id="KW-0862">Zinc</keyword>
<protein>
    <recommendedName>
        <fullName>Galactose-1-phosphate uridylyltransferase</fullName>
        <shortName>Gal-1-P uridylyltransferase</shortName>
        <ecNumber evidence="1">2.7.7.12</ecNumber>
    </recommendedName>
    <alternativeName>
        <fullName>UDP-glucose--hexose-1-phosphate uridylyltransferase</fullName>
    </alternativeName>
</protein>
<evidence type="ECO:0000250" key="1">
    <source>
        <dbReference type="UniProtKB" id="P09148"/>
    </source>
</evidence>
<evidence type="ECO:0000255" key="2">
    <source>
        <dbReference type="PROSITE-ProRule" id="PRU10033"/>
    </source>
</evidence>
<evidence type="ECO:0000256" key="3">
    <source>
        <dbReference type="SAM" id="MobiDB-lite"/>
    </source>
</evidence>
<evidence type="ECO:0000305" key="4"/>
<accession>P13212</accession>
<comment type="catalytic activity">
    <reaction evidence="1">
        <text>alpha-D-galactose 1-phosphate + UDP-alpha-D-glucose = alpha-D-glucose 1-phosphate + UDP-alpha-D-galactose</text>
        <dbReference type="Rhea" id="RHEA:13989"/>
        <dbReference type="ChEBI" id="CHEBI:58336"/>
        <dbReference type="ChEBI" id="CHEBI:58601"/>
        <dbReference type="ChEBI" id="CHEBI:58885"/>
        <dbReference type="ChEBI" id="CHEBI:66914"/>
        <dbReference type="EC" id="2.7.7.12"/>
    </reaction>
</comment>
<comment type="cofactor">
    <cofactor evidence="1">
        <name>Zn(2+)</name>
        <dbReference type="ChEBI" id="CHEBI:29105"/>
    </cofactor>
    <text evidence="1">Binds 1 zinc ion per subunit.</text>
</comment>
<comment type="pathway">
    <text>Carbohydrate metabolism; galactose metabolism.</text>
</comment>
<comment type="similarity">
    <text evidence="4">Belongs to the galactose-1-phosphate uridylyltransferase type 1 family.</text>
</comment>
<comment type="sequence caution" evidence="4">
    <conflict type="frameshift">
        <sequence resource="EMBL-CDS" id="AAA26746"/>
    </conflict>
</comment>
<organism>
    <name type="scientific">Streptomyces lividans</name>
    <dbReference type="NCBI Taxonomy" id="1916"/>
    <lineage>
        <taxon>Bacteria</taxon>
        <taxon>Bacillati</taxon>
        <taxon>Actinomycetota</taxon>
        <taxon>Actinomycetes</taxon>
        <taxon>Kitasatosporales</taxon>
        <taxon>Streptomycetaceae</taxon>
        <taxon>Streptomyces</taxon>
    </lineage>
</organism>
<sequence length="354" mass="40095">MKKTSTRLADGRELVYYDLRDDTVRDAVDRRPLERTVTTSEVRRDPLLGDSAPSRLAPQGRTYHPPADQCPLCPSGRGTAERDPAYDVVVFENRFPSLAGDSGRCEVVCFTSDHDASFADLSEEQARLVVDAWTDRTSELSHLPSVEQVFCFENRGAEIGVTLGHPHGQIYAYPFTTPRTALMLRSLAAHKDATGGGNLFDSVLEEELAGERVVLEGEHWAAFVAYGAHWPYEVHLYPKRRVPDLLGLDEAARTEFPKVYLELLRRFDRIFGEGEPPTPYIAAWHQAPFGQLEFEGVTRDDFALHLNFSLPPYVRQAEVPRGLRIRHERVHQRDVPPERAAERLREVADVHERE</sequence>
<gene>
    <name type="primary">galT</name>
</gene>
<name>GAL7_STRLI</name>
<dbReference type="EC" id="2.7.7.12" evidence="1"/>
<dbReference type="EMBL" id="M18953">
    <property type="protein sequence ID" value="AAA26746.1"/>
    <property type="status" value="ALT_FRAME"/>
    <property type="molecule type" value="Genomic_DNA"/>
</dbReference>
<dbReference type="PIR" id="A28669">
    <property type="entry name" value="XNSMUD"/>
</dbReference>
<dbReference type="SMR" id="P13212"/>
<dbReference type="UniPathway" id="UPA00214"/>
<dbReference type="GO" id="GO:0005737">
    <property type="term" value="C:cytoplasm"/>
    <property type="evidence" value="ECO:0007669"/>
    <property type="project" value="TreeGrafter"/>
</dbReference>
<dbReference type="GO" id="GO:0008108">
    <property type="term" value="F:UDP-glucose:hexose-1-phosphate uridylyltransferase activity"/>
    <property type="evidence" value="ECO:0007669"/>
    <property type="project" value="UniProtKB-EC"/>
</dbReference>
<dbReference type="GO" id="GO:0008270">
    <property type="term" value="F:zinc ion binding"/>
    <property type="evidence" value="ECO:0007669"/>
    <property type="project" value="InterPro"/>
</dbReference>
<dbReference type="GO" id="GO:0033499">
    <property type="term" value="P:galactose catabolic process via UDP-galactose, Leloir pathway"/>
    <property type="evidence" value="ECO:0007669"/>
    <property type="project" value="TreeGrafter"/>
</dbReference>
<dbReference type="FunFam" id="3.30.428.10:FF:000010">
    <property type="entry name" value="Galactose-1-phosphate uridylyltransferase"/>
    <property type="match status" value="1"/>
</dbReference>
<dbReference type="FunFam" id="3.30.428.10:FF:000019">
    <property type="entry name" value="Galactose-1-phosphate uridylyltransferase"/>
    <property type="match status" value="1"/>
</dbReference>
<dbReference type="Gene3D" id="3.30.428.10">
    <property type="entry name" value="HIT-like"/>
    <property type="match status" value="2"/>
</dbReference>
<dbReference type="InterPro" id="IPR001937">
    <property type="entry name" value="GalP_UDPtransf1"/>
</dbReference>
<dbReference type="InterPro" id="IPR019779">
    <property type="entry name" value="GalP_UDPtransf1_His-AS"/>
</dbReference>
<dbReference type="InterPro" id="IPR005850">
    <property type="entry name" value="GalP_Utransf_C"/>
</dbReference>
<dbReference type="InterPro" id="IPR005849">
    <property type="entry name" value="GalP_Utransf_N"/>
</dbReference>
<dbReference type="InterPro" id="IPR036265">
    <property type="entry name" value="HIT-like_sf"/>
</dbReference>
<dbReference type="NCBIfam" id="TIGR00209">
    <property type="entry name" value="galT_1"/>
    <property type="match status" value="1"/>
</dbReference>
<dbReference type="PANTHER" id="PTHR11943">
    <property type="entry name" value="GALACTOSE-1-PHOSPHATE URIDYLYLTRANSFERASE"/>
    <property type="match status" value="1"/>
</dbReference>
<dbReference type="PANTHER" id="PTHR11943:SF1">
    <property type="entry name" value="GALACTOSE-1-PHOSPHATE URIDYLYLTRANSFERASE"/>
    <property type="match status" value="1"/>
</dbReference>
<dbReference type="Pfam" id="PF02744">
    <property type="entry name" value="GalP_UDP_tr_C"/>
    <property type="match status" value="1"/>
</dbReference>
<dbReference type="Pfam" id="PF01087">
    <property type="entry name" value="GalP_UDP_transf"/>
    <property type="match status" value="1"/>
</dbReference>
<dbReference type="PIRSF" id="PIRSF000808">
    <property type="entry name" value="GalT"/>
    <property type="match status" value="1"/>
</dbReference>
<dbReference type="SUPFAM" id="SSF54197">
    <property type="entry name" value="HIT-like"/>
    <property type="match status" value="2"/>
</dbReference>
<dbReference type="PROSITE" id="PS00117">
    <property type="entry name" value="GAL_P_UDP_TRANSF_I"/>
    <property type="match status" value="1"/>
</dbReference>